<comment type="function">
    <text evidence="1 2">Requires HliD to bind pigments. The Ycf39-Hlip complex binds D1 at an early stage of PSII assembly along with Ycf48, ribosomes and ChlG, the last enzyme in chlorophyll biosynthesis; it may be involved in chlorophyll reuse and delivery to D1 in the initial stages of PSII assembly (PubMed:24681620). The Ycf39-Hlip complex efficiently quenches chlorophyll fluorescence, contributing to photoprotection (PubMed:25706339).</text>
</comment>
<comment type="subunit">
    <text evidence="1 2">Purified in several chlorophyll- and carotenoid-containing complexes, including photosystem II (PSII) assembly intermediate complex RCII* (iD1, D1, D2, PsbE, PsbF, PsbI, Ycf39, Ycf48, HliC and HliD) and the Ycf39-Hlip complex (Ycf39, HliC, HliD and pigments). Tagged protein does not pull down mature PSII.</text>
</comment>
<comment type="subcellular location">
    <subcellularLocation>
        <location evidence="4">Cellular thylakoid membrane</location>
        <topology evidence="1">Peripheral membrane protein</topology>
        <orientation evidence="1">Cytoplasmic side</orientation>
    </subcellularLocation>
</comment>
<comment type="disruption phenotype">
    <text evidence="1">No visible growth phenotype except under high light (700 umols photons/m(2)/s) where cells become temporarily photoinhibited. Decreased synthesis of D1 (psbA), loss of RCII* assembly complex, considerable decrease in PSII intermediate assembly complexes.</text>
</comment>
<comment type="similarity">
    <text evidence="3">Belongs to the NmrA-type oxidoreductase family. Ycf39 subfamily.</text>
</comment>
<reference evidence="5" key="1">
    <citation type="journal article" date="1996" name="DNA Res.">
        <title>Sequence analysis of the genome of the unicellular cyanobacterium Synechocystis sp. strain PCC6803. II. Sequence determination of the entire genome and assignment of potential protein-coding regions.</title>
        <authorList>
            <person name="Kaneko T."/>
            <person name="Sato S."/>
            <person name="Kotani H."/>
            <person name="Tanaka A."/>
            <person name="Asamizu E."/>
            <person name="Nakamura Y."/>
            <person name="Miyajima N."/>
            <person name="Hirosawa M."/>
            <person name="Sugiura M."/>
            <person name="Sasamoto S."/>
            <person name="Kimura T."/>
            <person name="Hosouchi T."/>
            <person name="Matsuno A."/>
            <person name="Muraki A."/>
            <person name="Nakazaki N."/>
            <person name="Naruo K."/>
            <person name="Okumura S."/>
            <person name="Shimpo S."/>
            <person name="Takeuchi C."/>
            <person name="Wada T."/>
            <person name="Watanabe A."/>
            <person name="Yamada M."/>
            <person name="Yasuda M."/>
            <person name="Tabata S."/>
        </authorList>
    </citation>
    <scope>NUCLEOTIDE SEQUENCE [LARGE SCALE GENOMIC DNA]</scope>
    <source>
        <strain>ATCC 27184 / PCC 6803 / Kazusa</strain>
    </source>
</reference>
<reference key="2">
    <citation type="journal article" date="2014" name="Plant Cell">
        <title>Discovery of a chlorophyll binding protein complex involved in the early steps of photosystem II assembly in Synechocystis.</title>
        <authorList>
            <person name="Knoppova J."/>
            <person name="Sobotka R."/>
            <person name="Tichy M."/>
            <person name="Yu J."/>
            <person name="Konik P."/>
            <person name="Halada P."/>
            <person name="Nixon P.J."/>
            <person name="Komenda J."/>
        </authorList>
    </citation>
    <scope>FUNCTION</scope>
    <scope>SUBUNIT</scope>
    <scope>SUBCELLULAR LOCATION</scope>
    <scope>DISRUPTION PHENOTYPE</scope>
    <source>
        <strain>ATCC 27184 / PCC 6803 / Kazusa</strain>
    </source>
</reference>
<reference key="3">
    <citation type="journal article" date="2015" name="Nat. Chem. Biol.">
        <title>Mechanism of photoprotection in the cyanobacterial ancestor of plant antenna proteins.</title>
        <authorList>
            <person name="Staleva H."/>
            <person name="Komenda J."/>
            <person name="Shukla M.K."/>
            <person name="Slouf V."/>
            <person name="Kana R."/>
            <person name="Polivka T."/>
            <person name="Sobotka R."/>
        </authorList>
    </citation>
    <scope>FUNCTION</scope>
    <scope>SUBUNIT</scope>
    <source>
        <strain>ATCC 27184 / PCC 6803 / Kazusa</strain>
    </source>
</reference>
<evidence type="ECO:0000269" key="1">
    <source>
    </source>
</evidence>
<evidence type="ECO:0000269" key="2">
    <source>
    </source>
</evidence>
<evidence type="ECO:0000305" key="3"/>
<evidence type="ECO:0000305" key="4">
    <source>
    </source>
</evidence>
<evidence type="ECO:0000312" key="5">
    <source>
        <dbReference type="EMBL" id="BAA18529.1"/>
    </source>
</evidence>
<keyword id="KW-0472">Membrane</keyword>
<keyword id="KW-0560">Oxidoreductase</keyword>
<keyword id="KW-0602">Photosynthesis</keyword>
<keyword id="KW-0604">Photosystem II</keyword>
<keyword id="KW-1185">Reference proteome</keyword>
<keyword id="KW-0793">Thylakoid</keyword>
<feature type="chain" id="PRO_0000459051" description="Photosystem II assembly factor Ycf39">
    <location>
        <begin position="1"/>
        <end position="326"/>
    </location>
</feature>
<organism>
    <name type="scientific">Synechocystis sp. (strain ATCC 27184 / PCC 6803 / Kazusa)</name>
    <dbReference type="NCBI Taxonomy" id="1111708"/>
    <lineage>
        <taxon>Bacteria</taxon>
        <taxon>Bacillati</taxon>
        <taxon>Cyanobacteriota</taxon>
        <taxon>Cyanophyceae</taxon>
        <taxon>Synechococcales</taxon>
        <taxon>Merismopediaceae</taxon>
        <taxon>Synechocystis</taxon>
    </lineage>
</organism>
<gene>
    <name evidence="5" type="primary">ycf39</name>
    <name evidence="5" type="ordered locus">slr0399</name>
</gene>
<accession>P74429</accession>
<sequence>MRVLVVGGTGTLGRQIVRQAIDQGHTVVCLVRSLRKAAFLKEWGATIVGGNICKPETLSPALENIDAVIDASTARATDSLTIRQVDWEGKLNLIRAVQKAGIKKFVFFSILRAAEYPKVPLMDIKNCTEKFLAQTNLDYTILQLAGFMQGLIGQYAIPILDNQSVWQTGENTPIAYMNTQDVAKFAVRAVELDSVARKTYPVVGSRAWGATEIIQLCERMSGNNARISQVPMAVLRFMRSFTRFFQWTYNASDRLAFSEVLASGKALTADMAPVYEQFGLDPKETTTLESYLQEYFGRIIKKLKELDYEVNPTQTEGKKKKNNFFF</sequence>
<proteinExistence type="evidence at protein level"/>
<dbReference type="EC" id="1.-.-.-" evidence="3"/>
<dbReference type="EMBL" id="BA000022">
    <property type="protein sequence ID" value="BAA18529.1"/>
    <property type="molecule type" value="Genomic_DNA"/>
</dbReference>
<dbReference type="PIR" id="S76400">
    <property type="entry name" value="S76400"/>
</dbReference>
<dbReference type="SMR" id="P74429"/>
<dbReference type="IntAct" id="P74429">
    <property type="interactions" value="8"/>
</dbReference>
<dbReference type="STRING" id="1148.gene:10499410"/>
<dbReference type="PaxDb" id="1148-1653617"/>
<dbReference type="EnsemblBacteria" id="BAA18529">
    <property type="protein sequence ID" value="BAA18529"/>
    <property type="gene ID" value="BAA18529"/>
</dbReference>
<dbReference type="KEGG" id="syn:slr0399"/>
<dbReference type="eggNOG" id="COG0702">
    <property type="taxonomic scope" value="Bacteria"/>
</dbReference>
<dbReference type="InParanoid" id="P74429"/>
<dbReference type="PhylomeDB" id="P74429"/>
<dbReference type="Proteomes" id="UP000001425">
    <property type="component" value="Chromosome"/>
</dbReference>
<dbReference type="GO" id="GO:0009523">
    <property type="term" value="C:photosystem II"/>
    <property type="evidence" value="ECO:0007669"/>
    <property type="project" value="UniProtKB-KW"/>
</dbReference>
<dbReference type="GO" id="GO:0031676">
    <property type="term" value="C:plasma membrane-derived thylakoid membrane"/>
    <property type="evidence" value="ECO:0007669"/>
    <property type="project" value="UniProtKB-SubCell"/>
</dbReference>
<dbReference type="GO" id="GO:0016491">
    <property type="term" value="F:oxidoreductase activity"/>
    <property type="evidence" value="ECO:0007669"/>
    <property type="project" value="UniProtKB-KW"/>
</dbReference>
<dbReference type="GO" id="GO:0015979">
    <property type="term" value="P:photosynthesis"/>
    <property type="evidence" value="ECO:0007669"/>
    <property type="project" value="UniProtKB-KW"/>
</dbReference>
<dbReference type="CDD" id="cd05243">
    <property type="entry name" value="SDR_a5"/>
    <property type="match status" value="1"/>
</dbReference>
<dbReference type="Gene3D" id="3.40.50.720">
    <property type="entry name" value="NAD(P)-binding Rossmann-like Domain"/>
    <property type="match status" value="1"/>
</dbReference>
<dbReference type="InterPro" id="IPR044256">
    <property type="entry name" value="HCF244-like"/>
</dbReference>
<dbReference type="InterPro" id="IPR016040">
    <property type="entry name" value="NAD(P)-bd_dom"/>
</dbReference>
<dbReference type="InterPro" id="IPR036291">
    <property type="entry name" value="NAD(P)-bd_dom_sf"/>
</dbReference>
<dbReference type="PANTHER" id="PTHR47128">
    <property type="match status" value="1"/>
</dbReference>
<dbReference type="PANTHER" id="PTHR47128:SF2">
    <property type="entry name" value="PROTEIN HIGH CHLOROPHYLL FLUORESCENCE PHENOTYPE 244, CHLOROPLASTIC"/>
    <property type="match status" value="1"/>
</dbReference>
<dbReference type="Pfam" id="PF13460">
    <property type="entry name" value="NAD_binding_10"/>
    <property type="match status" value="1"/>
</dbReference>
<dbReference type="SUPFAM" id="SSF51735">
    <property type="entry name" value="NAD(P)-binding Rossmann-fold domains"/>
    <property type="match status" value="1"/>
</dbReference>
<name>YCF39_SYNY3</name>
<protein>
    <recommendedName>
        <fullName evidence="3">Photosystem II assembly factor Ycf39</fullName>
        <ecNumber evidence="3">1.-.-.-</ecNumber>
    </recommendedName>
</protein>